<proteinExistence type="inferred from homology"/>
<protein>
    <recommendedName>
        <fullName evidence="1">Lipoprotein signal peptidase</fullName>
        <ecNumber evidence="1">3.4.23.36</ecNumber>
    </recommendedName>
    <alternativeName>
        <fullName evidence="1">Prolipoprotein signal peptidase</fullName>
    </alternativeName>
    <alternativeName>
        <fullName evidence="1">Signal peptidase II</fullName>
        <shortName evidence="1">SPase II</shortName>
    </alternativeName>
</protein>
<name>LSPA_SHIB3</name>
<gene>
    <name evidence="1" type="primary">lspA</name>
    <name type="ordered locus">SbBS512_E0031</name>
</gene>
<dbReference type="EC" id="3.4.23.36" evidence="1"/>
<dbReference type="EMBL" id="CP001063">
    <property type="protein sequence ID" value="ACD09834.1"/>
    <property type="molecule type" value="Genomic_DNA"/>
</dbReference>
<dbReference type="RefSeq" id="WP_000083372.1">
    <property type="nucleotide sequence ID" value="NC_010658.1"/>
</dbReference>
<dbReference type="SMR" id="B2U246"/>
<dbReference type="STRING" id="344609.SbBS512_E0031"/>
<dbReference type="MEROPS" id="A08.001"/>
<dbReference type="GeneID" id="93777409"/>
<dbReference type="KEGG" id="sbc:SbBS512_E0031"/>
<dbReference type="HOGENOM" id="CLU_083252_4_0_6"/>
<dbReference type="UniPathway" id="UPA00665"/>
<dbReference type="Proteomes" id="UP000001030">
    <property type="component" value="Chromosome"/>
</dbReference>
<dbReference type="GO" id="GO:0005886">
    <property type="term" value="C:plasma membrane"/>
    <property type="evidence" value="ECO:0007669"/>
    <property type="project" value="UniProtKB-SubCell"/>
</dbReference>
<dbReference type="GO" id="GO:0004190">
    <property type="term" value="F:aspartic-type endopeptidase activity"/>
    <property type="evidence" value="ECO:0007669"/>
    <property type="project" value="UniProtKB-UniRule"/>
</dbReference>
<dbReference type="GO" id="GO:0006508">
    <property type="term" value="P:proteolysis"/>
    <property type="evidence" value="ECO:0007669"/>
    <property type="project" value="UniProtKB-KW"/>
</dbReference>
<dbReference type="HAMAP" id="MF_00161">
    <property type="entry name" value="LspA"/>
    <property type="match status" value="1"/>
</dbReference>
<dbReference type="InterPro" id="IPR001872">
    <property type="entry name" value="Peptidase_A8"/>
</dbReference>
<dbReference type="NCBIfam" id="TIGR00077">
    <property type="entry name" value="lspA"/>
    <property type="match status" value="1"/>
</dbReference>
<dbReference type="PANTHER" id="PTHR33695">
    <property type="entry name" value="LIPOPROTEIN SIGNAL PEPTIDASE"/>
    <property type="match status" value="1"/>
</dbReference>
<dbReference type="PANTHER" id="PTHR33695:SF1">
    <property type="entry name" value="LIPOPROTEIN SIGNAL PEPTIDASE"/>
    <property type="match status" value="1"/>
</dbReference>
<dbReference type="Pfam" id="PF01252">
    <property type="entry name" value="Peptidase_A8"/>
    <property type="match status" value="1"/>
</dbReference>
<dbReference type="PRINTS" id="PR00781">
    <property type="entry name" value="LIPOSIGPTASE"/>
</dbReference>
<dbReference type="PROSITE" id="PS00855">
    <property type="entry name" value="SPASE_II"/>
    <property type="match status" value="1"/>
</dbReference>
<accession>B2U246</accession>
<organism>
    <name type="scientific">Shigella boydii serotype 18 (strain CDC 3083-94 / BS512)</name>
    <dbReference type="NCBI Taxonomy" id="344609"/>
    <lineage>
        <taxon>Bacteria</taxon>
        <taxon>Pseudomonadati</taxon>
        <taxon>Pseudomonadota</taxon>
        <taxon>Gammaproteobacteria</taxon>
        <taxon>Enterobacterales</taxon>
        <taxon>Enterobacteriaceae</taxon>
        <taxon>Shigella</taxon>
    </lineage>
</organism>
<feature type="chain" id="PRO_1000097282" description="Lipoprotein signal peptidase">
    <location>
        <begin position="1"/>
        <end position="164"/>
    </location>
</feature>
<feature type="transmembrane region" description="Helical" evidence="1">
    <location>
        <begin position="12"/>
        <end position="32"/>
    </location>
</feature>
<feature type="transmembrane region" description="Helical" evidence="1">
    <location>
        <begin position="70"/>
        <end position="90"/>
    </location>
</feature>
<feature type="transmembrane region" description="Helical" evidence="1">
    <location>
        <begin position="102"/>
        <end position="122"/>
    </location>
</feature>
<feature type="transmembrane region" description="Helical" evidence="1">
    <location>
        <begin position="137"/>
        <end position="157"/>
    </location>
</feature>
<feature type="active site" evidence="1">
    <location>
        <position position="123"/>
    </location>
</feature>
<feature type="active site" evidence="1">
    <location>
        <position position="141"/>
    </location>
</feature>
<keyword id="KW-0064">Aspartyl protease</keyword>
<keyword id="KW-0997">Cell inner membrane</keyword>
<keyword id="KW-1003">Cell membrane</keyword>
<keyword id="KW-0378">Hydrolase</keyword>
<keyword id="KW-0472">Membrane</keyword>
<keyword id="KW-0645">Protease</keyword>
<keyword id="KW-1185">Reference proteome</keyword>
<keyword id="KW-0812">Transmembrane</keyword>
<keyword id="KW-1133">Transmembrane helix</keyword>
<reference key="1">
    <citation type="submission" date="2008-05" db="EMBL/GenBank/DDBJ databases">
        <title>Complete sequence of Shigella boydii serotype 18 strain BS512.</title>
        <authorList>
            <person name="Rasko D.A."/>
            <person name="Rosovitz M."/>
            <person name="Maurelli A.T."/>
            <person name="Myers G."/>
            <person name="Seshadri R."/>
            <person name="Cer R."/>
            <person name="Jiang L."/>
            <person name="Ravel J."/>
            <person name="Sebastian Y."/>
        </authorList>
    </citation>
    <scope>NUCLEOTIDE SEQUENCE [LARGE SCALE GENOMIC DNA]</scope>
    <source>
        <strain>CDC 3083-94 / BS512</strain>
    </source>
</reference>
<evidence type="ECO:0000255" key="1">
    <source>
        <dbReference type="HAMAP-Rule" id="MF_00161"/>
    </source>
</evidence>
<comment type="function">
    <text evidence="1">This protein specifically catalyzes the removal of signal peptides from prolipoproteins.</text>
</comment>
<comment type="catalytic activity">
    <reaction evidence="1">
        <text>Release of signal peptides from bacterial membrane prolipoproteins. Hydrolyzes -Xaa-Yaa-Zaa-|-(S,diacylglyceryl)Cys-, in which Xaa is hydrophobic (preferably Leu), and Yaa (Ala or Ser) and Zaa (Gly or Ala) have small, neutral side chains.</text>
        <dbReference type="EC" id="3.4.23.36"/>
    </reaction>
</comment>
<comment type="pathway">
    <text evidence="1">Protein modification; lipoprotein biosynthesis (signal peptide cleavage).</text>
</comment>
<comment type="subcellular location">
    <subcellularLocation>
        <location evidence="1">Cell inner membrane</location>
        <topology evidence="1">Multi-pass membrane protein</topology>
    </subcellularLocation>
</comment>
<comment type="similarity">
    <text evidence="1">Belongs to the peptidase A8 family.</text>
</comment>
<sequence length="164" mass="18156">MSQSICSTGLRWLWLVVVVLIIDLGSKYLILQNFALGDTVPLFPSLNLHYARNYGAAFSFLADSGGWQRWFFAGIAIGISVILAVMMYRSKATQKLNNIAYALIIGGALGNLFDRLWHGFVVDMIDFYVGDWHFATFNLADTAICVGAALIVLEGFLPSRAKKQ</sequence>